<gene>
    <name type="ordered locus">ECU04_0100</name>
</gene>
<protein>
    <recommendedName>
        <fullName>UPF0328 protein ECU04_0100</fullName>
    </recommendedName>
</protein>
<dbReference type="EMBL" id="AL590444">
    <property type="protein sequence ID" value="CAD25197.1"/>
    <property type="molecule type" value="Genomic_DNA"/>
</dbReference>
<dbReference type="RefSeq" id="NP_584693.1">
    <property type="nucleotide sequence ID" value="NM_001041043.1"/>
</dbReference>
<dbReference type="GeneID" id="858841"/>
<dbReference type="KEGG" id="ecu:ECU04_0100"/>
<dbReference type="VEuPathDB" id="MicrosporidiaDB:ECU04_0100"/>
<dbReference type="HOGENOM" id="CLU_059413_0_0_1"/>
<dbReference type="InParanoid" id="Q8SVY6"/>
<dbReference type="Proteomes" id="UP000000819">
    <property type="component" value="Chromosome IV"/>
</dbReference>
<dbReference type="InterPro" id="IPR019081">
    <property type="entry name" value="UPF0328"/>
</dbReference>
<dbReference type="Pfam" id="PF09591">
    <property type="entry name" value="DUF2463"/>
    <property type="match status" value="1"/>
</dbReference>
<feature type="chain" id="PRO_0000223122" description="UPF0328 protein ECU04_0100">
    <location>
        <begin position="1"/>
        <end position="276"/>
    </location>
</feature>
<feature type="region of interest" description="Disordered" evidence="1">
    <location>
        <begin position="1"/>
        <end position="24"/>
    </location>
</feature>
<reference key="1">
    <citation type="journal article" date="2001" name="Nature">
        <title>Genome sequence and gene compaction of the eukaryote parasite Encephalitozoon cuniculi.</title>
        <authorList>
            <person name="Katinka M.D."/>
            <person name="Duprat S."/>
            <person name="Cornillot E."/>
            <person name="Metenier G."/>
            <person name="Thomarat F."/>
            <person name="Prensier G."/>
            <person name="Barbe V."/>
            <person name="Peyretaillade E."/>
            <person name="Brottier P."/>
            <person name="Wincker P."/>
            <person name="Delbac F."/>
            <person name="El Alaoui H."/>
            <person name="Peyret P."/>
            <person name="Saurin W."/>
            <person name="Gouy M."/>
            <person name="Weissenbach J."/>
            <person name="Vivares C.P."/>
        </authorList>
    </citation>
    <scope>NUCLEOTIDE SEQUENCE [LARGE SCALE GENOMIC DNA]</scope>
    <source>
        <strain>GB-M1</strain>
    </source>
</reference>
<comment type="similarity">
    <text evidence="2">Belongs to the UPF0328 family.</text>
</comment>
<evidence type="ECO:0000256" key="1">
    <source>
        <dbReference type="SAM" id="MobiDB-lite"/>
    </source>
</evidence>
<evidence type="ECO:0000305" key="2"/>
<keyword id="KW-1185">Reference proteome</keyword>
<proteinExistence type="inferred from homology"/>
<accession>Q8SVY6</accession>
<organism>
    <name type="scientific">Encephalitozoon cuniculi (strain GB-M1)</name>
    <name type="common">Microsporidian parasite</name>
    <dbReference type="NCBI Taxonomy" id="284813"/>
    <lineage>
        <taxon>Eukaryota</taxon>
        <taxon>Fungi</taxon>
        <taxon>Fungi incertae sedis</taxon>
        <taxon>Microsporidia</taxon>
        <taxon>Unikaryonidae</taxon>
        <taxon>Encephalitozoon</taxon>
    </lineage>
</organism>
<sequence>MGIIDVQRSHLTATPSKERDAPAHPPPTILPVCILFPYTSIALPVLMYYIPEKGQFDQNPFLKLIAILPPCLYSAVRFPLLFLGNPESSCTPRPALYATLYLLLDASLLAFSAISILSIAAFTTTEWNSDEVVAVCSTLLPSLLVLPAHLLSTSCALTPGSIGFTDSSVDILIDLLMVSLLAAGLTLNVDESWRFFPYICISSLVLVLAKLLRKSSSMPRRDPAPAPAWRIAAFVLIFGLSMFVYFSILYECLLIFGNHFPWFPSQAPSNDLTNKW</sequence>
<name>Y410_ENCCU</name>